<keyword id="KW-0963">Cytoplasm</keyword>
<keyword id="KW-0456">Lyase</keyword>
<keyword id="KW-0704">Schiff base</keyword>
<accession>P47722</accession>
<proteinExistence type="inferred from homology"/>
<name>DEOC_MYCPI</name>
<dbReference type="EC" id="4.1.2.4" evidence="1"/>
<dbReference type="EMBL" id="L13289">
    <property type="protein sequence ID" value="AAA25431.1"/>
    <property type="molecule type" value="Genomic_DNA"/>
</dbReference>
<dbReference type="PIR" id="B53312">
    <property type="entry name" value="B53312"/>
</dbReference>
<dbReference type="SMR" id="P47722"/>
<dbReference type="UniPathway" id="UPA00002">
    <property type="reaction ID" value="UER00468"/>
</dbReference>
<dbReference type="GO" id="GO:0005737">
    <property type="term" value="C:cytoplasm"/>
    <property type="evidence" value="ECO:0007669"/>
    <property type="project" value="UniProtKB-SubCell"/>
</dbReference>
<dbReference type="GO" id="GO:0004139">
    <property type="term" value="F:deoxyribose-phosphate aldolase activity"/>
    <property type="evidence" value="ECO:0007669"/>
    <property type="project" value="UniProtKB-UniRule"/>
</dbReference>
<dbReference type="GO" id="GO:0006018">
    <property type="term" value="P:2-deoxyribose 1-phosphate catabolic process"/>
    <property type="evidence" value="ECO:0007669"/>
    <property type="project" value="UniProtKB-UniRule"/>
</dbReference>
<dbReference type="GO" id="GO:0016052">
    <property type="term" value="P:carbohydrate catabolic process"/>
    <property type="evidence" value="ECO:0007669"/>
    <property type="project" value="TreeGrafter"/>
</dbReference>
<dbReference type="GO" id="GO:0009264">
    <property type="term" value="P:deoxyribonucleotide catabolic process"/>
    <property type="evidence" value="ECO:0007669"/>
    <property type="project" value="InterPro"/>
</dbReference>
<dbReference type="CDD" id="cd00959">
    <property type="entry name" value="DeoC"/>
    <property type="match status" value="1"/>
</dbReference>
<dbReference type="FunFam" id="3.20.20.70:FF:000044">
    <property type="entry name" value="Deoxyribose-phosphate aldolase"/>
    <property type="match status" value="1"/>
</dbReference>
<dbReference type="Gene3D" id="3.20.20.70">
    <property type="entry name" value="Aldolase class I"/>
    <property type="match status" value="1"/>
</dbReference>
<dbReference type="HAMAP" id="MF_00114">
    <property type="entry name" value="DeoC_type1"/>
    <property type="match status" value="1"/>
</dbReference>
<dbReference type="InterPro" id="IPR013785">
    <property type="entry name" value="Aldolase_TIM"/>
</dbReference>
<dbReference type="InterPro" id="IPR011343">
    <property type="entry name" value="DeoC"/>
</dbReference>
<dbReference type="InterPro" id="IPR002915">
    <property type="entry name" value="DeoC/FbaB/LacD_aldolase"/>
</dbReference>
<dbReference type="InterPro" id="IPR028581">
    <property type="entry name" value="DeoC_typeI"/>
</dbReference>
<dbReference type="NCBIfam" id="TIGR00126">
    <property type="entry name" value="deoC"/>
    <property type="match status" value="1"/>
</dbReference>
<dbReference type="PANTHER" id="PTHR10889">
    <property type="entry name" value="DEOXYRIBOSE-PHOSPHATE ALDOLASE"/>
    <property type="match status" value="1"/>
</dbReference>
<dbReference type="PANTHER" id="PTHR10889:SF1">
    <property type="entry name" value="DEOXYRIBOSE-PHOSPHATE ALDOLASE"/>
    <property type="match status" value="1"/>
</dbReference>
<dbReference type="Pfam" id="PF01791">
    <property type="entry name" value="DeoC"/>
    <property type="match status" value="1"/>
</dbReference>
<dbReference type="PIRSF" id="PIRSF001357">
    <property type="entry name" value="DeoC"/>
    <property type="match status" value="1"/>
</dbReference>
<dbReference type="SMART" id="SM01133">
    <property type="entry name" value="DeoC"/>
    <property type="match status" value="1"/>
</dbReference>
<dbReference type="SUPFAM" id="SSF51569">
    <property type="entry name" value="Aldolase"/>
    <property type="match status" value="1"/>
</dbReference>
<gene>
    <name evidence="1" type="primary">deoC</name>
</gene>
<organism>
    <name type="scientific">Mycoplasmoides pirum</name>
    <name type="common">Mycoplasma pirum</name>
    <dbReference type="NCBI Taxonomy" id="2122"/>
    <lineage>
        <taxon>Bacteria</taxon>
        <taxon>Bacillati</taxon>
        <taxon>Mycoplasmatota</taxon>
        <taxon>Mycoplasmoidales</taxon>
        <taxon>Mycoplasmoidaceae</taxon>
        <taxon>Mycoplasmoides</taxon>
    </lineage>
</organism>
<comment type="function">
    <text evidence="1">Catalyzes a reversible aldol reaction between acetaldehyde and D-glyceraldehyde 3-phosphate to generate 2-deoxy-D-ribose 5-phosphate.</text>
</comment>
<comment type="catalytic activity">
    <reaction evidence="1">
        <text>2-deoxy-D-ribose 5-phosphate = D-glyceraldehyde 3-phosphate + acetaldehyde</text>
        <dbReference type="Rhea" id="RHEA:12821"/>
        <dbReference type="ChEBI" id="CHEBI:15343"/>
        <dbReference type="ChEBI" id="CHEBI:59776"/>
        <dbReference type="ChEBI" id="CHEBI:62877"/>
        <dbReference type="EC" id="4.1.2.4"/>
    </reaction>
</comment>
<comment type="pathway">
    <text evidence="1">Carbohydrate degradation; 2-deoxy-D-ribose 1-phosphate degradation; D-glyceraldehyde 3-phosphate and acetaldehyde from 2-deoxy-alpha-D-ribose 1-phosphate: step 2/2.</text>
</comment>
<comment type="subcellular location">
    <subcellularLocation>
        <location evidence="1">Cytoplasm</location>
    </subcellularLocation>
</comment>
<comment type="similarity">
    <text evidence="1 2">Belongs to the DeoC/FbaB aldolase family. DeoC type 1 subfamily.</text>
</comment>
<feature type="chain" id="PRO_0000057244" description="Deoxyribose-phosphate aldolase">
    <location>
        <begin position="1"/>
        <end position="220"/>
    </location>
</feature>
<feature type="active site" description="Proton donor/acceptor" evidence="1">
    <location>
        <position position="89"/>
    </location>
</feature>
<feature type="active site" description="Schiff-base intermediate with acetaldehyde" evidence="1">
    <location>
        <position position="150"/>
    </location>
</feature>
<feature type="active site" description="Proton donor/acceptor" evidence="1">
    <location>
        <position position="182"/>
    </location>
</feature>
<protein>
    <recommendedName>
        <fullName evidence="1">Deoxyribose-phosphate aldolase</fullName>
        <shortName evidence="1">DERA</shortName>
        <ecNumber evidence="1">4.1.2.4</ecNumber>
    </recommendedName>
    <alternativeName>
        <fullName evidence="1">2-deoxy-D-ribose 5-phosphate aldolase</fullName>
    </alternativeName>
    <alternativeName>
        <fullName evidence="1">Phosphodeoxyriboaldolase</fullName>
        <shortName evidence="1">Deoxyriboaldolase</shortName>
    </alternativeName>
</protein>
<evidence type="ECO:0000255" key="1">
    <source>
        <dbReference type="HAMAP-Rule" id="MF_00114"/>
    </source>
</evidence>
<evidence type="ECO:0000305" key="2"/>
<sequence length="220" mass="24421">MNYNSLFDHTLLRADASVEEIKQLCDEAVKFNFFSVCVNPSYVPYVKEQLHNSSVKICTVVGFPLGQTSTKQKVYETKIAIKEGADEIDMVLNISEFKENCACVVNEIRKYKKVCKKKILKVIVETALLSENEIEKATLVVIDGGADFIKTSTGFSSRGASIKDIEIMKNVIEKNNSKLKIKASGGIKTLTFVEELIKAGAERIGSSKSVEIIKETLNKN</sequence>
<reference key="1">
    <citation type="journal article" date="1993" name="J. Bacteriol.">
        <title>Identification of Mycoplasma pirum genes involved in the salvage pathways for nucleosides.</title>
        <authorList>
            <person name="Tham T.N."/>
            <person name="Ferris S."/>
            <person name="Kovacic R."/>
            <person name="Montagnier L."/>
            <person name="Blanchard A."/>
        </authorList>
    </citation>
    <scope>NUCLEOTIDE SEQUENCE [GENOMIC DNA]</scope>
    <source>
        <strain>BER</strain>
    </source>
</reference>